<proteinExistence type="evidence at protein level"/>
<protein>
    <recommendedName>
        <fullName>2-hydroxymuconic semialdehyde dehydrogenase</fullName>
        <shortName>HMSD</shortName>
        <ecNumber>1.2.1.85</ecNumber>
    </recommendedName>
</protein>
<keyword id="KW-0058">Aromatic hydrocarbons catabolism</keyword>
<keyword id="KW-0903">Direct protein sequencing</keyword>
<keyword id="KW-0520">NAD</keyword>
<keyword id="KW-0560">Oxidoreductase</keyword>
<keyword id="KW-0614">Plasmid</keyword>
<comment type="function">
    <text>2-hydroxymuconic acid semialdehyde can be converted to 2-hydroxypent-2,4-dienoate either directly by the action of 2-hydroxymuconic semialdehyde hydrolase (HMSH) or by the action of three sequential enzymes, the first of which is HMSD. Can oxidize not only 2-hydroxymuconic semialdehyde and its analogs but also benzaldehyde and its analogs.</text>
</comment>
<comment type="catalytic activity">
    <reaction evidence="2">
        <text>(2Z,4E)-2-hydroxy-6-oxohexa-2,4-dienoate + NAD(+) + H2O = (2Z,4E)-2-hydroxyhexa-2,4-dienedioate + NADH + 2 H(+)</text>
        <dbReference type="Rhea" id="RHEA:34219"/>
        <dbReference type="ChEBI" id="CHEBI:15377"/>
        <dbReference type="ChEBI" id="CHEBI:15378"/>
        <dbReference type="ChEBI" id="CHEBI:28080"/>
        <dbReference type="ChEBI" id="CHEBI:57540"/>
        <dbReference type="ChEBI" id="CHEBI:57945"/>
        <dbReference type="ChEBI" id="CHEBI:71198"/>
        <dbReference type="EC" id="1.2.1.85"/>
    </reaction>
</comment>
<comment type="biophysicochemical properties">
    <phDependence>
        <text>Optimum pH is 8.3 for the oxidation of 2-hydroxymuconic semialdehyde, and 9.6 for that of benzaldehyde.</text>
    </phDependence>
</comment>
<comment type="pathway">
    <text>Aromatic compound metabolism; benzoate degradation via hydroxylation.</text>
</comment>
<comment type="subunit">
    <text>Homodimer.</text>
</comment>
<comment type="similarity">
    <text evidence="3">Belongs to the aldehyde dehydrogenase family.</text>
</comment>
<dbReference type="EC" id="1.2.1.85"/>
<dbReference type="EMBL" id="M64747">
    <property type="protein sequence ID" value="AAA26053.1"/>
    <property type="molecule type" value="Genomic_DNA"/>
</dbReference>
<dbReference type="PIR" id="E42902">
    <property type="entry name" value="E42902"/>
</dbReference>
<dbReference type="RefSeq" id="NP_542865.1">
    <property type="nucleotide sequence ID" value="NC_003350.1"/>
</dbReference>
<dbReference type="RefSeq" id="WP_011005908.1">
    <property type="nucleotide sequence ID" value="NC_003350.1"/>
</dbReference>
<dbReference type="SMR" id="P23105"/>
<dbReference type="KEGG" id="ag:AAA26053"/>
<dbReference type="BioCyc" id="MetaCyc:MONOMER-3402"/>
<dbReference type="UniPathway" id="UPA00156"/>
<dbReference type="GO" id="GO:0016620">
    <property type="term" value="F:oxidoreductase activity, acting on the aldehyde or oxo group of donors, NAD or NADP as acceptor"/>
    <property type="evidence" value="ECO:0007669"/>
    <property type="project" value="InterPro"/>
</dbReference>
<dbReference type="GO" id="GO:0043640">
    <property type="term" value="P:benzoate catabolic process via hydroxylation"/>
    <property type="evidence" value="ECO:0007669"/>
    <property type="project" value="UniProtKB-UniPathway"/>
</dbReference>
<dbReference type="CDD" id="cd07093">
    <property type="entry name" value="ALDH_F8_HMSADH"/>
    <property type="match status" value="1"/>
</dbReference>
<dbReference type="FunFam" id="3.40.309.10:FF:000009">
    <property type="entry name" value="Aldehyde dehydrogenase A"/>
    <property type="match status" value="1"/>
</dbReference>
<dbReference type="FunFam" id="3.40.605.10:FF:000007">
    <property type="entry name" value="NAD/NADP-dependent betaine aldehyde dehydrogenase"/>
    <property type="match status" value="1"/>
</dbReference>
<dbReference type="Gene3D" id="3.40.605.10">
    <property type="entry name" value="Aldehyde Dehydrogenase, Chain A, domain 1"/>
    <property type="match status" value="1"/>
</dbReference>
<dbReference type="Gene3D" id="3.40.309.10">
    <property type="entry name" value="Aldehyde Dehydrogenase, Chain A, domain 2"/>
    <property type="match status" value="1"/>
</dbReference>
<dbReference type="InterPro" id="IPR016161">
    <property type="entry name" value="Ald_DH/histidinol_DH"/>
</dbReference>
<dbReference type="InterPro" id="IPR016163">
    <property type="entry name" value="Ald_DH_C"/>
</dbReference>
<dbReference type="InterPro" id="IPR016160">
    <property type="entry name" value="Ald_DH_CS_CYS"/>
</dbReference>
<dbReference type="InterPro" id="IPR029510">
    <property type="entry name" value="Ald_DH_CS_GLU"/>
</dbReference>
<dbReference type="InterPro" id="IPR016162">
    <property type="entry name" value="Ald_DH_N"/>
</dbReference>
<dbReference type="InterPro" id="IPR015590">
    <property type="entry name" value="Aldehyde_DH_dom"/>
</dbReference>
<dbReference type="InterPro" id="IPR017628">
    <property type="entry name" value="OHmuconic_semiald_DH"/>
</dbReference>
<dbReference type="NCBIfam" id="TIGR03216">
    <property type="entry name" value="OH_muco_semi_DH"/>
    <property type="match status" value="1"/>
</dbReference>
<dbReference type="PANTHER" id="PTHR43720">
    <property type="entry name" value="2-AMINOMUCONIC SEMIALDEHYDE DEHYDROGENASE"/>
    <property type="match status" value="1"/>
</dbReference>
<dbReference type="PANTHER" id="PTHR43720:SF2">
    <property type="entry name" value="2-AMINOMUCONIC SEMIALDEHYDE DEHYDROGENASE"/>
    <property type="match status" value="1"/>
</dbReference>
<dbReference type="Pfam" id="PF00171">
    <property type="entry name" value="Aldedh"/>
    <property type="match status" value="1"/>
</dbReference>
<dbReference type="SUPFAM" id="SSF53720">
    <property type="entry name" value="ALDH-like"/>
    <property type="match status" value="1"/>
</dbReference>
<dbReference type="PROSITE" id="PS00070">
    <property type="entry name" value="ALDEHYDE_DEHYDR_CYS"/>
    <property type="match status" value="1"/>
</dbReference>
<dbReference type="PROSITE" id="PS00687">
    <property type="entry name" value="ALDEHYDE_DEHYDR_GLU"/>
    <property type="match status" value="1"/>
</dbReference>
<organism>
    <name type="scientific">Pseudomonas putida</name>
    <name type="common">Arthrobacter siderocapsulatus</name>
    <dbReference type="NCBI Taxonomy" id="303"/>
    <lineage>
        <taxon>Bacteria</taxon>
        <taxon>Pseudomonadati</taxon>
        <taxon>Pseudomonadota</taxon>
        <taxon>Gammaproteobacteria</taxon>
        <taxon>Pseudomonadales</taxon>
        <taxon>Pseudomonadaceae</taxon>
        <taxon>Pseudomonas</taxon>
    </lineage>
</organism>
<feature type="chain" id="PRO_0000056594" description="2-hydroxymuconic semialdehyde dehydrogenase">
    <location>
        <begin position="1"/>
        <end position="486"/>
    </location>
</feature>
<feature type="active site" evidence="1">
    <location>
        <position position="254"/>
    </location>
</feature>
<feature type="active site" evidence="1">
    <location>
        <position position="288"/>
    </location>
</feature>
<feature type="sequence conflict" description="In Ref. 3; AA sequence." evidence="3" ref="3">
    <original>EL</original>
    <variation>AF</variation>
    <location>
        <begin position="11"/>
        <end position="12"/>
    </location>
</feature>
<reference key="1">
    <citation type="journal article" date="1991" name="Mol. Microbiol.">
        <title>DNA sequence determination of the TOL plasmid (pWWO) xylGFJ genes of Pseudomonas putida: implications for the evolution of aromatic catabolism.</title>
        <authorList>
            <person name="Horn J.M."/>
            <person name="Harayama S."/>
            <person name="Timmis K.N."/>
        </authorList>
    </citation>
    <scope>NUCLEOTIDE SEQUENCE [GENOMIC DNA]</scope>
</reference>
<reference key="2">
    <citation type="journal article" date="1992" name="J. Biol. Chem.">
        <title>Characterization of the mmsAB operon of Pseudomonas aeruginosa PAO encoding methylmalonate-semialdehyde dehydrogenase and 3-hydroxyisobutyrate dehydrogenase.</title>
        <authorList>
            <person name="Steele M.I."/>
            <person name="Lorenz D."/>
            <person name="Hatter K."/>
            <person name="Park A."/>
            <person name="Sokatch J.R."/>
        </authorList>
    </citation>
    <scope>NUCLEOTIDE SEQUENCE [GENOMIC DNA]</scope>
    <source>
        <strain>PAO</strain>
    </source>
</reference>
<reference key="3">
    <citation type="journal article" date="1995" name="J. Bacteriol.">
        <title>Overlapping substrate specificities of benzaldehyde dehydrogenase (the xylC gene product) and 2-hydroxymuconic semialdehyde dehydrogenase (the xylG gene product) encoded by TOL plasmid pWW0 of Pseudomonas putida.</title>
        <authorList>
            <person name="Inoue J."/>
            <person name="Shaw J.P."/>
            <person name="Rekik M."/>
            <person name="Harayama S."/>
        </authorList>
    </citation>
    <scope>PROTEIN SEQUENCE OF 1-15</scope>
    <scope>CATALYTIC ACTIVITY</scope>
</reference>
<accession>P23105</accession>
<gene>
    <name type="primary">xylG</name>
</gene>
<evidence type="ECO:0000250" key="1"/>
<evidence type="ECO:0000269" key="2">
    <source>
    </source>
</evidence>
<evidence type="ECO:0000305" key="3"/>
<geneLocation type="plasmid">
    <name>TOL pWW0</name>
</geneLocation>
<sequence length="486" mass="51761">MKEIKHFISGELVGSASGKLFDNVSPANGQVIGRVHEAGRAEVDAAVRAARAALKGPWGKMTVAERAEILHRVADGITARFGEFLEARMPGHRQAEVAGQPHRHSARRANFKVFADLLKNVANEAFEMATPDGAGALNYGVRRPKGVIGVISPWNLPLLLMTWKVGPALACGNCVVVKPSEETPLTATLLGEVMQAAGVPAGVYNVVHGFGGDSAGAFLTEHPDVDAYTFTGETGTGETIMRAAAKGVRQVSLELGGKNAGIVFADCDMDKAIEGTLRSAFANCGQVCLGTERVYVERPIFDAFVARLKAGAEALKIGEPNDPEANFGPLISHKPREKVPSYYQQAVDDGATVVTGGGVPEMPAHLAGGAWVQPTIWTGLADDSAVVTEEIFGPCCHIRPFDSEEEAIELANSLPYGLASAIWTENVRRAHRVAGQIEAGIVWVNSWFLRDLRTAFGGSKQSGIGREGGVHSLEFYTELKNICVKL</sequence>
<name>XYLG_PSEPU</name>